<feature type="chain" id="PRO_0000317086" description="Deoxyribonuclease Tat-D">
    <location>
        <begin position="1"/>
        <end position="312"/>
    </location>
</feature>
<feature type="binding site" evidence="1">
    <location>
        <position position="124"/>
    </location>
    <ligand>
        <name>a divalent metal cation</name>
        <dbReference type="ChEBI" id="CHEBI:60240"/>
        <label>1</label>
    </ligand>
</feature>
<feature type="binding site" evidence="1">
    <location>
        <position position="124"/>
    </location>
    <ligand>
        <name>a divalent metal cation</name>
        <dbReference type="ChEBI" id="CHEBI:60240"/>
        <label>2</label>
    </ligand>
</feature>
<feature type="binding site" evidence="1">
    <location>
        <position position="161"/>
    </location>
    <ligand>
        <name>a divalent metal cation</name>
        <dbReference type="ChEBI" id="CHEBI:60240"/>
        <label>2</label>
    </ligand>
</feature>
<feature type="binding site" evidence="1">
    <location>
        <position position="187"/>
    </location>
    <ligand>
        <name>a divalent metal cation</name>
        <dbReference type="ChEBI" id="CHEBI:60240"/>
        <label>2</label>
    </ligand>
</feature>
<feature type="binding site" evidence="1">
    <location>
        <position position="235"/>
    </location>
    <ligand>
        <name>a divalent metal cation</name>
        <dbReference type="ChEBI" id="CHEBI:60240"/>
        <label>1</label>
    </ligand>
</feature>
<dbReference type="EC" id="3.1.21.-"/>
<dbReference type="EMBL" id="AB004537">
    <property type="protein sequence ID" value="BAA21418.1"/>
    <property type="status" value="ALT_SEQ"/>
    <property type="molecule type" value="Genomic_DNA"/>
</dbReference>
<dbReference type="EMBL" id="CU329671">
    <property type="protein sequence ID" value="CAB51767.1"/>
    <property type="molecule type" value="Genomic_DNA"/>
</dbReference>
<dbReference type="PIR" id="T39700">
    <property type="entry name" value="T39700"/>
</dbReference>
<dbReference type="RefSeq" id="NP_595590.1">
    <property type="nucleotide sequence ID" value="NM_001021486.2"/>
</dbReference>
<dbReference type="SMR" id="Q9UUF1"/>
<dbReference type="BioGRID" id="276447">
    <property type="interactions" value="5"/>
</dbReference>
<dbReference type="FunCoup" id="Q9UUF1">
    <property type="interactions" value="244"/>
</dbReference>
<dbReference type="STRING" id="284812.Q9UUF1"/>
<dbReference type="PaxDb" id="4896-SPBC17A3.08.1"/>
<dbReference type="EnsemblFungi" id="SPBC17A3.08.1">
    <property type="protein sequence ID" value="SPBC17A3.08.1:pep"/>
    <property type="gene ID" value="SPBC17A3.08"/>
</dbReference>
<dbReference type="KEGG" id="spo:2539901"/>
<dbReference type="PomBase" id="SPBC17A3.08"/>
<dbReference type="VEuPathDB" id="FungiDB:SPBC17A3.08"/>
<dbReference type="eggNOG" id="KOG3020">
    <property type="taxonomic scope" value="Eukaryota"/>
</dbReference>
<dbReference type="HOGENOM" id="CLU_031506_1_0_1"/>
<dbReference type="InParanoid" id="Q9UUF1"/>
<dbReference type="OMA" id="YGGSQKH"/>
<dbReference type="PhylomeDB" id="Q9UUF1"/>
<dbReference type="PRO" id="PR:Q9UUF1"/>
<dbReference type="Proteomes" id="UP000002485">
    <property type="component" value="Chromosome II"/>
</dbReference>
<dbReference type="GO" id="GO:0005829">
    <property type="term" value="C:cytosol"/>
    <property type="evidence" value="ECO:0007005"/>
    <property type="project" value="PomBase"/>
</dbReference>
<dbReference type="GO" id="GO:0005634">
    <property type="term" value="C:nucleus"/>
    <property type="evidence" value="ECO:0007005"/>
    <property type="project" value="PomBase"/>
</dbReference>
<dbReference type="GO" id="GO:0008296">
    <property type="term" value="F:3'-5'-DNA exonuclease activity"/>
    <property type="evidence" value="ECO:0000318"/>
    <property type="project" value="GO_Central"/>
</dbReference>
<dbReference type="GO" id="GO:0046872">
    <property type="term" value="F:metal ion binding"/>
    <property type="evidence" value="ECO:0007669"/>
    <property type="project" value="UniProtKB-KW"/>
</dbReference>
<dbReference type="GO" id="GO:0006308">
    <property type="term" value="P:DNA catabolic process"/>
    <property type="evidence" value="ECO:0000305"/>
    <property type="project" value="PomBase"/>
</dbReference>
<dbReference type="CDD" id="cd01310">
    <property type="entry name" value="TatD_DNAse"/>
    <property type="match status" value="1"/>
</dbReference>
<dbReference type="Gene3D" id="3.20.20.140">
    <property type="entry name" value="Metal-dependent hydrolases"/>
    <property type="match status" value="1"/>
</dbReference>
<dbReference type="InterPro" id="IPR032466">
    <property type="entry name" value="Metal_Hydrolase"/>
</dbReference>
<dbReference type="InterPro" id="IPR001130">
    <property type="entry name" value="TatD-like"/>
</dbReference>
<dbReference type="InterPro" id="IPR050891">
    <property type="entry name" value="TatD-type_Hydrolase"/>
</dbReference>
<dbReference type="PANTHER" id="PTHR10060:SF15">
    <property type="entry name" value="DEOXYRIBONUCLEASE TATDN1"/>
    <property type="match status" value="1"/>
</dbReference>
<dbReference type="PANTHER" id="PTHR10060">
    <property type="entry name" value="TATD FAMILY DEOXYRIBONUCLEASE"/>
    <property type="match status" value="1"/>
</dbReference>
<dbReference type="Pfam" id="PF01026">
    <property type="entry name" value="TatD_DNase"/>
    <property type="match status" value="1"/>
</dbReference>
<dbReference type="PIRSF" id="PIRSF005902">
    <property type="entry name" value="DNase_TatD"/>
    <property type="match status" value="1"/>
</dbReference>
<dbReference type="SUPFAM" id="SSF51556">
    <property type="entry name" value="Metallo-dependent hydrolases"/>
    <property type="match status" value="1"/>
</dbReference>
<sequence>MASIRQAFVKSLRFYDIGYNATDPVFRGIYHEKLKHPDDFDSIISRAKAVGVEKMMITGDNVENSEEALNLATNYECFTSTVGVHPCQAQCFLRHSEGPEDYLVKLEALANKGKASGKVVAFGEFGLDYDRLHYAPADVQKMYFEEQLKVAVRVQLPLFLHSRNAENDFFAILEKYLPELPKKGVVHSFTGSIDEMRRCIEHGLYVGVNGCSLKTEENLEVVRAIPLEKMLLETDAPWCEVRPSHAGHQFLKTKLPFDSCKKERFKEGCMIRGRNEPCNTYIVAEIVAALKDISLEELSEQIWENSINLLSK</sequence>
<gene>
    <name type="ORF">pi038</name>
    <name type="ORF">SPBC17A3.08</name>
</gene>
<reference key="1">
    <citation type="journal article" date="2000" name="Yeast">
        <title>A 38 kb segment containing the cdc2 gene from the left arm of fission yeast chromosome II: sequence analysis and characterization of the genomic DNA and cDNAs encoded on the segment.</title>
        <authorList>
            <person name="Machida M."/>
            <person name="Yamazaki S."/>
            <person name="Kunihiro S."/>
            <person name="Tanaka T."/>
            <person name="Kushida N."/>
            <person name="Jinno K."/>
            <person name="Haikawa Y."/>
            <person name="Yamazaki J."/>
            <person name="Yamamoto S."/>
            <person name="Sekine M."/>
            <person name="Oguchi A."/>
            <person name="Nagai Y."/>
            <person name="Sakai M."/>
            <person name="Aoki K."/>
            <person name="Ogura K."/>
            <person name="Kudoh Y."/>
            <person name="Kikuchi H."/>
            <person name="Zhang M.Q."/>
            <person name="Yanagida M."/>
        </authorList>
    </citation>
    <scope>NUCLEOTIDE SEQUENCE [LARGE SCALE GENOMIC DNA]</scope>
    <source>
        <strain>972 / ATCC 24843</strain>
    </source>
</reference>
<reference key="2">
    <citation type="journal article" date="2002" name="Nature">
        <title>The genome sequence of Schizosaccharomyces pombe.</title>
        <authorList>
            <person name="Wood V."/>
            <person name="Gwilliam R."/>
            <person name="Rajandream M.A."/>
            <person name="Lyne M.H."/>
            <person name="Lyne R."/>
            <person name="Stewart A."/>
            <person name="Sgouros J.G."/>
            <person name="Peat N."/>
            <person name="Hayles J."/>
            <person name="Baker S.G."/>
            <person name="Basham D."/>
            <person name="Bowman S."/>
            <person name="Brooks K."/>
            <person name="Brown D."/>
            <person name="Brown S."/>
            <person name="Chillingworth T."/>
            <person name="Churcher C.M."/>
            <person name="Collins M."/>
            <person name="Connor R."/>
            <person name="Cronin A."/>
            <person name="Davis P."/>
            <person name="Feltwell T."/>
            <person name="Fraser A."/>
            <person name="Gentles S."/>
            <person name="Goble A."/>
            <person name="Hamlin N."/>
            <person name="Harris D.E."/>
            <person name="Hidalgo J."/>
            <person name="Hodgson G."/>
            <person name="Holroyd S."/>
            <person name="Hornsby T."/>
            <person name="Howarth S."/>
            <person name="Huckle E.J."/>
            <person name="Hunt S."/>
            <person name="Jagels K."/>
            <person name="James K.D."/>
            <person name="Jones L."/>
            <person name="Jones M."/>
            <person name="Leather S."/>
            <person name="McDonald S."/>
            <person name="McLean J."/>
            <person name="Mooney P."/>
            <person name="Moule S."/>
            <person name="Mungall K.L."/>
            <person name="Murphy L.D."/>
            <person name="Niblett D."/>
            <person name="Odell C."/>
            <person name="Oliver K."/>
            <person name="O'Neil S."/>
            <person name="Pearson D."/>
            <person name="Quail M.A."/>
            <person name="Rabbinowitsch E."/>
            <person name="Rutherford K.M."/>
            <person name="Rutter S."/>
            <person name="Saunders D."/>
            <person name="Seeger K."/>
            <person name="Sharp S."/>
            <person name="Skelton J."/>
            <person name="Simmonds M.N."/>
            <person name="Squares R."/>
            <person name="Squares S."/>
            <person name="Stevens K."/>
            <person name="Taylor K."/>
            <person name="Taylor R.G."/>
            <person name="Tivey A."/>
            <person name="Walsh S.V."/>
            <person name="Warren T."/>
            <person name="Whitehead S."/>
            <person name="Woodward J.R."/>
            <person name="Volckaert G."/>
            <person name="Aert R."/>
            <person name="Robben J."/>
            <person name="Grymonprez B."/>
            <person name="Weltjens I."/>
            <person name="Vanstreels E."/>
            <person name="Rieger M."/>
            <person name="Schaefer M."/>
            <person name="Mueller-Auer S."/>
            <person name="Gabel C."/>
            <person name="Fuchs M."/>
            <person name="Duesterhoeft A."/>
            <person name="Fritzc C."/>
            <person name="Holzer E."/>
            <person name="Moestl D."/>
            <person name="Hilbert H."/>
            <person name="Borzym K."/>
            <person name="Langer I."/>
            <person name="Beck A."/>
            <person name="Lehrach H."/>
            <person name="Reinhardt R."/>
            <person name="Pohl T.M."/>
            <person name="Eger P."/>
            <person name="Zimmermann W."/>
            <person name="Wedler H."/>
            <person name="Wambutt R."/>
            <person name="Purnelle B."/>
            <person name="Goffeau A."/>
            <person name="Cadieu E."/>
            <person name="Dreano S."/>
            <person name="Gloux S."/>
            <person name="Lelaure V."/>
            <person name="Mottier S."/>
            <person name="Galibert F."/>
            <person name="Aves S.J."/>
            <person name="Xiang Z."/>
            <person name="Hunt C."/>
            <person name="Moore K."/>
            <person name="Hurst S.M."/>
            <person name="Lucas M."/>
            <person name="Rochet M."/>
            <person name="Gaillardin C."/>
            <person name="Tallada V.A."/>
            <person name="Garzon A."/>
            <person name="Thode G."/>
            <person name="Daga R.R."/>
            <person name="Cruzado L."/>
            <person name="Jimenez J."/>
            <person name="Sanchez M."/>
            <person name="del Rey F."/>
            <person name="Benito J."/>
            <person name="Dominguez A."/>
            <person name="Revuelta J.L."/>
            <person name="Moreno S."/>
            <person name="Armstrong J."/>
            <person name="Forsburg S.L."/>
            <person name="Cerutti L."/>
            <person name="Lowe T."/>
            <person name="McCombie W.R."/>
            <person name="Paulsen I."/>
            <person name="Potashkin J."/>
            <person name="Shpakovski G.V."/>
            <person name="Ussery D."/>
            <person name="Barrell B.G."/>
            <person name="Nurse P."/>
        </authorList>
    </citation>
    <scope>NUCLEOTIDE SEQUENCE [LARGE SCALE GENOMIC DNA]</scope>
    <source>
        <strain>972 / ATCC 24843</strain>
    </source>
</reference>
<reference key="3">
    <citation type="journal article" date="2006" name="Nat. Biotechnol.">
        <title>ORFeome cloning and global analysis of protein localization in the fission yeast Schizosaccharomyces pombe.</title>
        <authorList>
            <person name="Matsuyama A."/>
            <person name="Arai R."/>
            <person name="Yashiroda Y."/>
            <person name="Shirai A."/>
            <person name="Kamata A."/>
            <person name="Sekido S."/>
            <person name="Kobayashi Y."/>
            <person name="Hashimoto A."/>
            <person name="Hamamoto M."/>
            <person name="Hiraoka Y."/>
            <person name="Horinouchi S."/>
            <person name="Yoshida M."/>
        </authorList>
    </citation>
    <scope>SUBCELLULAR LOCATION [LARGE SCALE ANALYSIS]</scope>
</reference>
<keyword id="KW-0963">Cytoplasm</keyword>
<keyword id="KW-0378">Hydrolase</keyword>
<keyword id="KW-0479">Metal-binding</keyword>
<keyword id="KW-0540">Nuclease</keyword>
<keyword id="KW-0539">Nucleus</keyword>
<keyword id="KW-1185">Reference proteome</keyword>
<organism>
    <name type="scientific">Schizosaccharomyces pombe (strain 972 / ATCC 24843)</name>
    <name type="common">Fission yeast</name>
    <dbReference type="NCBI Taxonomy" id="284812"/>
    <lineage>
        <taxon>Eukaryota</taxon>
        <taxon>Fungi</taxon>
        <taxon>Dikarya</taxon>
        <taxon>Ascomycota</taxon>
        <taxon>Taphrinomycotina</taxon>
        <taxon>Schizosaccharomycetes</taxon>
        <taxon>Schizosaccharomycetales</taxon>
        <taxon>Schizosaccharomycetaceae</taxon>
        <taxon>Schizosaccharomyces</taxon>
    </lineage>
</organism>
<protein>
    <recommendedName>
        <fullName>Deoxyribonuclease Tat-D</fullName>
        <ecNumber>3.1.21.-</ecNumber>
    </recommendedName>
</protein>
<name>YNF8_SCHPO</name>
<evidence type="ECO:0000250" key="1"/>
<evidence type="ECO:0000269" key="2">
    <source>
    </source>
</evidence>
<evidence type="ECO:0000305" key="3"/>
<proteinExistence type="inferred from homology"/>
<comment type="function">
    <text evidence="1">Has both endo- and exonuclease activities. Incises double-stranded DNA without obvious specificity via its endonuclease activity and excises the DNA from the 3'-to 5'-end by its exonuclease activity. May have a role in apoptosis (By similarity).</text>
</comment>
<comment type="cofactor">
    <cofactor evidence="1">
        <name>a divalent metal cation</name>
        <dbReference type="ChEBI" id="CHEBI:60240"/>
    </cofactor>
</comment>
<comment type="subcellular location">
    <subcellularLocation>
        <location evidence="2">Cytoplasm</location>
    </subcellularLocation>
    <subcellularLocation>
        <location evidence="2">Nucleus</location>
    </subcellularLocation>
</comment>
<comment type="similarity">
    <text evidence="3">Belongs to the metallo-dependent hydrolases superfamily. TatD-type hydrolase family.</text>
</comment>
<comment type="sequence caution" evidence="3">
    <conflict type="erroneous gene model prediction">
        <sequence resource="EMBL-CDS" id="BAA21418"/>
    </conflict>
</comment>
<accession>Q9UUF1</accession>
<accession>O13630</accession>